<dbReference type="EMBL" id="AL111168">
    <property type="protein sequence ID" value="CAL35224.1"/>
    <property type="molecule type" value="Genomic_DNA"/>
</dbReference>
<dbReference type="PIR" id="F81314">
    <property type="entry name" value="F81314"/>
</dbReference>
<dbReference type="RefSeq" id="WP_002852892.1">
    <property type="nucleotide sequence ID" value="NZ_SZUC01000001.1"/>
</dbReference>
<dbReference type="RefSeq" id="YP_002344500.1">
    <property type="nucleotide sequence ID" value="NC_002163.1"/>
</dbReference>
<dbReference type="SMR" id="Q9PNI7"/>
<dbReference type="IntAct" id="Q9PNI7">
    <property type="interactions" value="1"/>
</dbReference>
<dbReference type="STRING" id="192222.Cj1107"/>
<dbReference type="PaxDb" id="192222-Cj1107"/>
<dbReference type="EnsemblBacteria" id="CAL35224">
    <property type="protein sequence ID" value="CAL35224"/>
    <property type="gene ID" value="Cj1107"/>
</dbReference>
<dbReference type="GeneID" id="905398"/>
<dbReference type="KEGG" id="cje:Cj1107"/>
<dbReference type="PATRIC" id="fig|192222.6.peg.1089"/>
<dbReference type="eggNOG" id="COG2127">
    <property type="taxonomic scope" value="Bacteria"/>
</dbReference>
<dbReference type="HOGENOM" id="CLU_134358_1_0_7"/>
<dbReference type="OrthoDB" id="9796121at2"/>
<dbReference type="Proteomes" id="UP000000799">
    <property type="component" value="Chromosome"/>
</dbReference>
<dbReference type="GO" id="GO:0030163">
    <property type="term" value="P:protein catabolic process"/>
    <property type="evidence" value="ECO:0007669"/>
    <property type="project" value="InterPro"/>
</dbReference>
<dbReference type="GO" id="GO:0006508">
    <property type="term" value="P:proteolysis"/>
    <property type="evidence" value="ECO:0007669"/>
    <property type="project" value="UniProtKB-UniRule"/>
</dbReference>
<dbReference type="FunFam" id="3.30.1390.10:FF:000002">
    <property type="entry name" value="ATP-dependent Clp protease adapter protein ClpS"/>
    <property type="match status" value="1"/>
</dbReference>
<dbReference type="Gene3D" id="3.30.1390.10">
    <property type="match status" value="1"/>
</dbReference>
<dbReference type="HAMAP" id="MF_00302">
    <property type="entry name" value="ClpS"/>
    <property type="match status" value="1"/>
</dbReference>
<dbReference type="InterPro" id="IPR022935">
    <property type="entry name" value="ClpS"/>
</dbReference>
<dbReference type="InterPro" id="IPR003769">
    <property type="entry name" value="ClpS_core"/>
</dbReference>
<dbReference type="InterPro" id="IPR014719">
    <property type="entry name" value="Ribosomal_bL12_C/ClpS-like"/>
</dbReference>
<dbReference type="PANTHER" id="PTHR33473:SF19">
    <property type="entry name" value="ATP-DEPENDENT CLP PROTEASE ADAPTER PROTEIN CLPS"/>
    <property type="match status" value="1"/>
</dbReference>
<dbReference type="PANTHER" id="PTHR33473">
    <property type="entry name" value="ATP-DEPENDENT CLP PROTEASE ADAPTER PROTEIN CLPS1, CHLOROPLASTIC"/>
    <property type="match status" value="1"/>
</dbReference>
<dbReference type="Pfam" id="PF02617">
    <property type="entry name" value="ClpS"/>
    <property type="match status" value="1"/>
</dbReference>
<dbReference type="SUPFAM" id="SSF54736">
    <property type="entry name" value="ClpS-like"/>
    <property type="match status" value="1"/>
</dbReference>
<gene>
    <name evidence="1" type="primary">clpS</name>
    <name type="ordered locus">Cj1107</name>
</gene>
<reference key="1">
    <citation type="journal article" date="2000" name="Nature">
        <title>The genome sequence of the food-borne pathogen Campylobacter jejuni reveals hypervariable sequences.</title>
        <authorList>
            <person name="Parkhill J."/>
            <person name="Wren B.W."/>
            <person name="Mungall K.L."/>
            <person name="Ketley J.M."/>
            <person name="Churcher C.M."/>
            <person name="Basham D."/>
            <person name="Chillingworth T."/>
            <person name="Davies R.M."/>
            <person name="Feltwell T."/>
            <person name="Holroyd S."/>
            <person name="Jagels K."/>
            <person name="Karlyshev A.V."/>
            <person name="Moule S."/>
            <person name="Pallen M.J."/>
            <person name="Penn C.W."/>
            <person name="Quail M.A."/>
            <person name="Rajandream M.A."/>
            <person name="Rutherford K.M."/>
            <person name="van Vliet A.H.M."/>
            <person name="Whitehead S."/>
            <person name="Barrell B.G."/>
        </authorList>
    </citation>
    <scope>NUCLEOTIDE SEQUENCE [LARGE SCALE GENOMIC DNA]</scope>
    <source>
        <strain>ATCC 700819 / NCTC 11168</strain>
    </source>
</reference>
<evidence type="ECO:0000255" key="1">
    <source>
        <dbReference type="HAMAP-Rule" id="MF_00302"/>
    </source>
</evidence>
<proteinExistence type="inferred from homology"/>
<name>CLPS_CAMJE</name>
<accession>Q9PNI7</accession>
<accession>Q0P9E7</accession>
<feature type="chain" id="PRO_0000215696" description="ATP-dependent Clp protease adapter protein ClpS">
    <location>
        <begin position="1"/>
        <end position="96"/>
    </location>
</feature>
<protein>
    <recommendedName>
        <fullName evidence="1">ATP-dependent Clp protease adapter protein ClpS</fullName>
    </recommendedName>
</protein>
<comment type="function">
    <text evidence="1">Involved in the modulation of the specificity of the ClpAP-mediated ATP-dependent protein degradation.</text>
</comment>
<comment type="subunit">
    <text evidence="1">Binds to the N-terminal domain of the chaperone ClpA.</text>
</comment>
<comment type="similarity">
    <text evidence="1">Belongs to the ClpS family.</text>
</comment>
<sequence>MPKTQTLEQTKLSEPKMYKVILLNDDVTTMDFVIEILMNIFHQNLEKASQTMLEIHHNGSGICGIYTQEIALSKQKKVMDAAKLANFPLQAKVEEE</sequence>
<keyword id="KW-1185">Reference proteome</keyword>
<organism>
    <name type="scientific">Campylobacter jejuni subsp. jejuni serotype O:2 (strain ATCC 700819 / NCTC 11168)</name>
    <dbReference type="NCBI Taxonomy" id="192222"/>
    <lineage>
        <taxon>Bacteria</taxon>
        <taxon>Pseudomonadati</taxon>
        <taxon>Campylobacterota</taxon>
        <taxon>Epsilonproteobacteria</taxon>
        <taxon>Campylobacterales</taxon>
        <taxon>Campylobacteraceae</taxon>
        <taxon>Campylobacter</taxon>
    </lineage>
</organism>